<name>SPI2_VAR67</name>
<proteinExistence type="inferred from homology"/>
<dbReference type="EMBL" id="X69198">
    <property type="protein sequence ID" value="CAA49122.1"/>
    <property type="molecule type" value="Genomic_DNA"/>
</dbReference>
<dbReference type="EMBL" id="X67117">
    <property type="protein sequence ID" value="CAA47523.1"/>
    <property type="molecule type" value="Genomic_DNA"/>
</dbReference>
<dbReference type="PIR" id="S46871">
    <property type="entry name" value="S46871"/>
</dbReference>
<dbReference type="RefSeq" id="NP_042225.1">
    <property type="nucleotide sequence ID" value="NC_001611.1"/>
</dbReference>
<dbReference type="SMR" id="P0DSW3"/>
<dbReference type="MINT" id="P0DSW3"/>
<dbReference type="GeneID" id="1486543"/>
<dbReference type="KEGG" id="vg:1486543"/>
<dbReference type="Proteomes" id="UP000002060">
    <property type="component" value="Segment"/>
</dbReference>
<dbReference type="GO" id="GO:0005615">
    <property type="term" value="C:extracellular space"/>
    <property type="evidence" value="ECO:0007669"/>
    <property type="project" value="InterPro"/>
</dbReference>
<dbReference type="GO" id="GO:0030430">
    <property type="term" value="C:host cell cytoplasm"/>
    <property type="evidence" value="ECO:0007669"/>
    <property type="project" value="UniProtKB-SubCell"/>
</dbReference>
<dbReference type="GO" id="GO:0004867">
    <property type="term" value="F:serine-type endopeptidase inhibitor activity"/>
    <property type="evidence" value="ECO:0007669"/>
    <property type="project" value="UniProtKB-KW"/>
</dbReference>
<dbReference type="GO" id="GO:0033668">
    <property type="term" value="P:symbiont-mediated suppression of host apoptosis"/>
    <property type="evidence" value="ECO:0007669"/>
    <property type="project" value="UniProtKB-KW"/>
</dbReference>
<dbReference type="CDD" id="cd19583">
    <property type="entry name" value="serpinN_SPI-1_SPI-2"/>
    <property type="match status" value="1"/>
</dbReference>
<dbReference type="FunFam" id="1.10.287.580:FF:000001">
    <property type="entry name" value="Serine proteinase inhibitor 2"/>
    <property type="match status" value="1"/>
</dbReference>
<dbReference type="Gene3D" id="2.30.39.10">
    <property type="entry name" value="Alpha-1-antitrypsin, domain 1"/>
    <property type="match status" value="1"/>
</dbReference>
<dbReference type="Gene3D" id="3.30.497.10">
    <property type="entry name" value="Antithrombin, subunit I, domain 2"/>
    <property type="match status" value="1"/>
</dbReference>
<dbReference type="Gene3D" id="1.10.287.580">
    <property type="entry name" value="Helix hairpin bin"/>
    <property type="match status" value="1"/>
</dbReference>
<dbReference type="InterPro" id="IPR023795">
    <property type="entry name" value="Serpin_CS"/>
</dbReference>
<dbReference type="InterPro" id="IPR023796">
    <property type="entry name" value="Serpin_dom"/>
</dbReference>
<dbReference type="InterPro" id="IPR000215">
    <property type="entry name" value="Serpin_fam"/>
</dbReference>
<dbReference type="InterPro" id="IPR036186">
    <property type="entry name" value="Serpin_sf"/>
</dbReference>
<dbReference type="InterPro" id="IPR042178">
    <property type="entry name" value="Serpin_sf_1"/>
</dbReference>
<dbReference type="InterPro" id="IPR042185">
    <property type="entry name" value="Serpin_sf_2"/>
</dbReference>
<dbReference type="PANTHER" id="PTHR11461:SF211">
    <property type="entry name" value="GH10112P-RELATED"/>
    <property type="match status" value="1"/>
</dbReference>
<dbReference type="PANTHER" id="PTHR11461">
    <property type="entry name" value="SERINE PROTEASE INHIBITOR, SERPIN"/>
    <property type="match status" value="1"/>
</dbReference>
<dbReference type="Pfam" id="PF00079">
    <property type="entry name" value="Serpin"/>
    <property type="match status" value="1"/>
</dbReference>
<dbReference type="SMART" id="SM00093">
    <property type="entry name" value="SERPIN"/>
    <property type="match status" value="1"/>
</dbReference>
<dbReference type="SUPFAM" id="SSF56574">
    <property type="entry name" value="Serpins"/>
    <property type="match status" value="1"/>
</dbReference>
<dbReference type="PROSITE" id="PS00284">
    <property type="entry name" value="SERPIN"/>
    <property type="match status" value="1"/>
</dbReference>
<reference key="1">
    <citation type="journal article" date="1993" name="FEBS Lett.">
        <title>Genes of variola and vaccinia viruses necessary to overcome the host protective mechanisms.</title>
        <authorList>
            <person name="Shchelkunov S.N."/>
            <person name="Blinov V.M."/>
            <person name="Sandakhchiev L.S."/>
        </authorList>
    </citation>
    <scope>NUCLEOTIDE SEQUENCE [GENOMIC DNA]</scope>
</reference>
<organismHost>
    <name type="scientific">Homo sapiens</name>
    <name type="common">Human</name>
    <dbReference type="NCBI Taxonomy" id="9606"/>
</organismHost>
<protein>
    <recommendedName>
        <fullName>Serine proteinase inhibitor 2</fullName>
        <shortName>Serp-2</shortName>
        <shortName>Serpin-2</shortName>
    </recommendedName>
</protein>
<organism>
    <name type="scientific">Variola virus (isolate Human/India/Ind3/1967)</name>
    <name type="common">VARV</name>
    <name type="synonym">Smallpox virus</name>
    <dbReference type="NCBI Taxonomy" id="587200"/>
    <lineage>
        <taxon>Viruses</taxon>
        <taxon>Varidnaviria</taxon>
        <taxon>Bamfordvirae</taxon>
        <taxon>Nucleocytoviricota</taxon>
        <taxon>Pokkesviricetes</taxon>
        <taxon>Chitovirales</taxon>
        <taxon>Poxviridae</taxon>
        <taxon>Chordopoxvirinae</taxon>
        <taxon>Orthopoxvirus</taxon>
        <taxon>Variola virus</taxon>
    </lineage>
</organism>
<keyword id="KW-1035">Host cytoplasm</keyword>
<keyword id="KW-0945">Host-virus interaction</keyword>
<keyword id="KW-1085">Inhibition of host caspases by virus</keyword>
<keyword id="KW-1119">Modulation of host cell apoptosis by virus</keyword>
<keyword id="KW-0646">Protease inhibitor</keyword>
<keyword id="KW-1185">Reference proteome</keyword>
<keyword id="KW-0722">Serine protease inhibitor</keyword>
<evidence type="ECO:0000250" key="1"/>
<evidence type="ECO:0000250" key="2">
    <source>
        <dbReference type="UniProtKB" id="P07385"/>
    </source>
</evidence>
<evidence type="ECO:0000250" key="3">
    <source>
        <dbReference type="UniProtKB" id="P15059"/>
    </source>
</evidence>
<evidence type="ECO:0000305" key="4"/>
<feature type="chain" id="PRO_0000094145" description="Serine proteinase inhibitor 2">
    <location>
        <begin position="1"/>
        <end position="344"/>
    </location>
</feature>
<feature type="site" description="Reactive bond" evidence="1">
    <location>
        <begin position="306"/>
        <end position="307"/>
    </location>
</feature>
<gene>
    <name type="primary">OPG199</name>
    <name type="synonym">SPI-2</name>
    <name type="ORF">B12R</name>
    <name type="ORF">B13R</name>
    <name type="ORF">B14R</name>
</gene>
<sequence>MDIFREIASSTKGENVFISPATISSVLTILYYGANGSTAEQLSKYVEKEETMDKVSAQNISFKSMNKVYGRYSAVFKNSFLGKIGDNFQTVDFTDCRTIDAINKCVDVFTEGKINPLLTEQLSPNTCLLAISAVYFKAKWLIPFKKEFTSDYPFYVSPTEMVDVSMMSMYGESFNYASVKESFGNFSIIELPYVGNTSMMVILPDKIDGLESIKQNLTDTNFKKWCNSLEATFIDVHIPKFKVTGSYNLVDTLVKLGLTDVFYSTGDYSNMCNSDVSVDAMIHKTYIDVNEEYTEAAAATSVLVADCASTVTNEFCADHPFIYVIRHVDGKILFVGRYCSPTTN</sequence>
<accession>P0DSW3</accession>
<accession>P33830</accession>
<comment type="function">
    <text evidence="2 3">Viral serpin that inhibits both cysteine and serine proteinases involved in the regulation of host inflammatory and apoptosis processes. Major anti-apoptotic protein which inhibits both intrinsic and extrinsic pathways and strongly cleaves host CASP1 and CASP8 but is a rather poor inhibitor of host CASP3. Prevents the proteolytic activity of host interleukin-1-beta converting enzyme (ICE) and ICE-like enzymes. Can also block apoptosis through host tumor necrosis factor (TNF) receptor (By similarity). The inhibition of host ICE is an example of a 'cross-class' interaction, in which a serpin inhibits a non-serine proteinase. Also inhibits granzyme B (By similarity).</text>
</comment>
<comment type="subcellular location">
    <subcellularLocation>
        <location evidence="3">Host cytoplasm</location>
    </subcellularLocation>
</comment>
<comment type="similarity">
    <text evidence="4">Belongs to the serpin family. Poxviruses subfamily.</text>
</comment>